<protein>
    <recommendedName>
        <fullName evidence="1">HTH-type transcriptional regulator YidZ</fullName>
    </recommendedName>
</protein>
<keyword id="KW-0238">DNA-binding</keyword>
<keyword id="KW-0804">Transcription</keyword>
<keyword id="KW-0805">Transcription regulation</keyword>
<evidence type="ECO:0000255" key="1">
    <source>
        <dbReference type="HAMAP-Rule" id="MF_01607"/>
    </source>
</evidence>
<evidence type="ECO:0000305" key="2"/>
<dbReference type="EMBL" id="AL513382">
    <property type="protein sequence ID" value="CAD03151.1"/>
    <property type="status" value="ALT_INIT"/>
    <property type="molecule type" value="Genomic_DNA"/>
</dbReference>
<dbReference type="EMBL" id="AE014613">
    <property type="protein sequence ID" value="AAO71171.1"/>
    <property type="molecule type" value="Genomic_DNA"/>
</dbReference>
<dbReference type="RefSeq" id="NP_458098.3">
    <property type="nucleotide sequence ID" value="NC_003198.1"/>
</dbReference>
<dbReference type="RefSeq" id="WP_000749373.1">
    <property type="nucleotide sequence ID" value="NZ_WSUR01000023.1"/>
</dbReference>
<dbReference type="SMR" id="Q8Z2P0"/>
<dbReference type="STRING" id="220341.gene:17587794"/>
<dbReference type="KEGG" id="stt:t3675"/>
<dbReference type="KEGG" id="sty:STY3935"/>
<dbReference type="PATRIC" id="fig|220341.7.peg.4015"/>
<dbReference type="eggNOG" id="COG0583">
    <property type="taxonomic scope" value="Bacteria"/>
</dbReference>
<dbReference type="HOGENOM" id="CLU_039613_39_2_6"/>
<dbReference type="OMA" id="SRMRTAW"/>
<dbReference type="OrthoDB" id="8893795at2"/>
<dbReference type="Proteomes" id="UP000000541">
    <property type="component" value="Chromosome"/>
</dbReference>
<dbReference type="Proteomes" id="UP000002670">
    <property type="component" value="Chromosome"/>
</dbReference>
<dbReference type="GO" id="GO:0003677">
    <property type="term" value="F:DNA binding"/>
    <property type="evidence" value="ECO:0007669"/>
    <property type="project" value="UniProtKB-KW"/>
</dbReference>
<dbReference type="GO" id="GO:0003700">
    <property type="term" value="F:DNA-binding transcription factor activity"/>
    <property type="evidence" value="ECO:0007669"/>
    <property type="project" value="UniProtKB-UniRule"/>
</dbReference>
<dbReference type="CDD" id="cd08417">
    <property type="entry name" value="PBP2_Nitroaromatics_like"/>
    <property type="match status" value="1"/>
</dbReference>
<dbReference type="Gene3D" id="3.40.190.10">
    <property type="entry name" value="Periplasmic binding protein-like II"/>
    <property type="match status" value="2"/>
</dbReference>
<dbReference type="Gene3D" id="1.10.10.10">
    <property type="entry name" value="Winged helix-like DNA-binding domain superfamily/Winged helix DNA-binding domain"/>
    <property type="match status" value="1"/>
</dbReference>
<dbReference type="HAMAP" id="MF_01607">
    <property type="entry name" value="HTH_type_YidZ"/>
    <property type="match status" value="1"/>
</dbReference>
<dbReference type="InterPro" id="IPR050389">
    <property type="entry name" value="LysR-type_TF"/>
</dbReference>
<dbReference type="InterPro" id="IPR005119">
    <property type="entry name" value="LysR_subst-bd"/>
</dbReference>
<dbReference type="InterPro" id="IPR000847">
    <property type="entry name" value="Tscrpt_reg_HTH_LysR"/>
</dbReference>
<dbReference type="InterPro" id="IPR023746">
    <property type="entry name" value="Tscrpt_reg_YidZ"/>
</dbReference>
<dbReference type="InterPro" id="IPR036388">
    <property type="entry name" value="WH-like_DNA-bd_sf"/>
</dbReference>
<dbReference type="InterPro" id="IPR036390">
    <property type="entry name" value="WH_DNA-bd_sf"/>
</dbReference>
<dbReference type="InterPro" id="IPR037402">
    <property type="entry name" value="YidZ_PBP2"/>
</dbReference>
<dbReference type="NCBIfam" id="NF007581">
    <property type="entry name" value="PRK10216.1"/>
    <property type="match status" value="1"/>
</dbReference>
<dbReference type="PANTHER" id="PTHR30118">
    <property type="entry name" value="HTH-TYPE TRANSCRIPTIONAL REGULATOR LEUO-RELATED"/>
    <property type="match status" value="1"/>
</dbReference>
<dbReference type="PANTHER" id="PTHR30118:SF11">
    <property type="entry name" value="HTH-TYPE TRANSCRIPTIONAL REGULATOR YIDZ"/>
    <property type="match status" value="1"/>
</dbReference>
<dbReference type="Pfam" id="PF00126">
    <property type="entry name" value="HTH_1"/>
    <property type="match status" value="1"/>
</dbReference>
<dbReference type="Pfam" id="PF03466">
    <property type="entry name" value="LysR_substrate"/>
    <property type="match status" value="1"/>
</dbReference>
<dbReference type="SUPFAM" id="SSF53850">
    <property type="entry name" value="Periplasmic binding protein-like II"/>
    <property type="match status" value="1"/>
</dbReference>
<dbReference type="SUPFAM" id="SSF46785">
    <property type="entry name" value="Winged helix' DNA-binding domain"/>
    <property type="match status" value="1"/>
</dbReference>
<dbReference type="PROSITE" id="PS50931">
    <property type="entry name" value="HTH_LYSR"/>
    <property type="match status" value="1"/>
</dbReference>
<sequence>MKKSLTSLDLNLLLCLQLLMQERSVTKAAKRMNVTPSAVSKSLAKLRAWFDDPLFVNTPLGLAPTPLMVSMEQSLADWMQMGNQLLDKPHHQTPRGLKFELAAESPLMMIMFNSLSQQIYQRYPQATIKVRNWDYDSLEAITRGKVDIGFTGRESHPRSRELISLLPLAIDFEVLFSDLPWVWLQEDHPALREAWDLDTFLRYPHISICWEQSDTWALDDVLQEMGRKRHIALSLPGFEQSLFMAAQPGHTLIATAPRYCQHYNQLHQLPLVARPLPFDAQQREKLMVPFTLLWHKRNSHNPKIVWLRQAINTLCRRLI</sequence>
<organism>
    <name type="scientific">Salmonella typhi</name>
    <dbReference type="NCBI Taxonomy" id="90370"/>
    <lineage>
        <taxon>Bacteria</taxon>
        <taxon>Pseudomonadati</taxon>
        <taxon>Pseudomonadota</taxon>
        <taxon>Gammaproteobacteria</taxon>
        <taxon>Enterobacterales</taxon>
        <taxon>Enterobacteriaceae</taxon>
        <taxon>Salmonella</taxon>
    </lineage>
</organism>
<feature type="chain" id="PRO_0000105805" description="HTH-type transcriptional regulator YidZ">
    <location>
        <begin position="1"/>
        <end position="319"/>
    </location>
</feature>
<feature type="domain" description="HTH lysR-type" evidence="1">
    <location>
        <begin position="8"/>
        <end position="65"/>
    </location>
</feature>
<feature type="DNA-binding region" description="H-T-H motif" evidence="1">
    <location>
        <begin position="25"/>
        <end position="44"/>
    </location>
</feature>
<reference key="1">
    <citation type="journal article" date="2001" name="Nature">
        <title>Complete genome sequence of a multiple drug resistant Salmonella enterica serovar Typhi CT18.</title>
        <authorList>
            <person name="Parkhill J."/>
            <person name="Dougan G."/>
            <person name="James K.D."/>
            <person name="Thomson N.R."/>
            <person name="Pickard D."/>
            <person name="Wain J."/>
            <person name="Churcher C.M."/>
            <person name="Mungall K.L."/>
            <person name="Bentley S.D."/>
            <person name="Holden M.T.G."/>
            <person name="Sebaihia M."/>
            <person name="Baker S."/>
            <person name="Basham D."/>
            <person name="Brooks K."/>
            <person name="Chillingworth T."/>
            <person name="Connerton P."/>
            <person name="Cronin A."/>
            <person name="Davis P."/>
            <person name="Davies R.M."/>
            <person name="Dowd L."/>
            <person name="White N."/>
            <person name="Farrar J."/>
            <person name="Feltwell T."/>
            <person name="Hamlin N."/>
            <person name="Haque A."/>
            <person name="Hien T.T."/>
            <person name="Holroyd S."/>
            <person name="Jagels K."/>
            <person name="Krogh A."/>
            <person name="Larsen T.S."/>
            <person name="Leather S."/>
            <person name="Moule S."/>
            <person name="O'Gaora P."/>
            <person name="Parry C."/>
            <person name="Quail M.A."/>
            <person name="Rutherford K.M."/>
            <person name="Simmonds M."/>
            <person name="Skelton J."/>
            <person name="Stevens K."/>
            <person name="Whitehead S."/>
            <person name="Barrell B.G."/>
        </authorList>
    </citation>
    <scope>NUCLEOTIDE SEQUENCE [LARGE SCALE GENOMIC DNA]</scope>
    <source>
        <strain>CT18</strain>
    </source>
</reference>
<reference key="2">
    <citation type="journal article" date="2003" name="J. Bacteriol.">
        <title>Comparative genomics of Salmonella enterica serovar Typhi strains Ty2 and CT18.</title>
        <authorList>
            <person name="Deng W."/>
            <person name="Liou S.-R."/>
            <person name="Plunkett G. III"/>
            <person name="Mayhew G.F."/>
            <person name="Rose D.J."/>
            <person name="Burland V."/>
            <person name="Kodoyianni V."/>
            <person name="Schwartz D.C."/>
            <person name="Blattner F.R."/>
        </authorList>
    </citation>
    <scope>NUCLEOTIDE SEQUENCE [LARGE SCALE GENOMIC DNA]</scope>
    <source>
        <strain>ATCC 700931 / Ty2</strain>
    </source>
</reference>
<gene>
    <name evidence="1" type="primary">yidZ</name>
    <name type="ordered locus">STY3935</name>
    <name type="ordered locus">t3675</name>
</gene>
<comment type="function">
    <text evidence="1">Involved in anaerobic NO protection.</text>
</comment>
<comment type="similarity">
    <text evidence="2">Belongs to the LysR transcriptional regulatory family.</text>
</comment>
<comment type="sequence caution" evidence="2">
    <conflict type="erroneous initiation">
        <sequence resource="EMBL-CDS" id="CAD03151"/>
    </conflict>
</comment>
<proteinExistence type="inferred from homology"/>
<accession>Q8Z2P0</accession>
<accession>Q7C6H5</accession>
<name>YIDZ_SALTI</name>